<accession>B4RKF0</accession>
<name>ISPE_NEIG2</name>
<keyword id="KW-0067">ATP-binding</keyword>
<keyword id="KW-0414">Isoprene biosynthesis</keyword>
<keyword id="KW-0418">Kinase</keyword>
<keyword id="KW-0547">Nucleotide-binding</keyword>
<keyword id="KW-0808">Transferase</keyword>
<evidence type="ECO:0000255" key="1">
    <source>
        <dbReference type="HAMAP-Rule" id="MF_00061"/>
    </source>
</evidence>
<proteinExistence type="inferred from homology"/>
<protein>
    <recommendedName>
        <fullName evidence="1">4-diphosphocytidyl-2-C-methyl-D-erythritol kinase</fullName>
        <shortName evidence="1">CMK</shortName>
        <ecNumber evidence="1">2.7.1.148</ecNumber>
    </recommendedName>
    <alternativeName>
        <fullName evidence="1">4-(cytidine-5'-diphospho)-2-C-methyl-D-erythritol kinase</fullName>
    </alternativeName>
</protein>
<feature type="chain" id="PRO_1000092100" description="4-diphosphocytidyl-2-C-methyl-D-erythritol kinase">
    <location>
        <begin position="1"/>
        <end position="281"/>
    </location>
</feature>
<feature type="active site" evidence="1">
    <location>
        <position position="15"/>
    </location>
</feature>
<feature type="active site" evidence="1">
    <location>
        <position position="140"/>
    </location>
</feature>
<feature type="binding site" evidence="1">
    <location>
        <begin position="98"/>
        <end position="108"/>
    </location>
    <ligand>
        <name>ATP</name>
        <dbReference type="ChEBI" id="CHEBI:30616"/>
    </ligand>
</feature>
<gene>
    <name evidence="1" type="primary">ispE</name>
    <name type="ordered locus">NGK_0610</name>
</gene>
<dbReference type="EC" id="2.7.1.148" evidence="1"/>
<dbReference type="EMBL" id="CP001050">
    <property type="protein sequence ID" value="ACF29301.1"/>
    <property type="molecule type" value="Genomic_DNA"/>
</dbReference>
<dbReference type="RefSeq" id="WP_003692812.1">
    <property type="nucleotide sequence ID" value="NC_011035.1"/>
</dbReference>
<dbReference type="SMR" id="B4RKF0"/>
<dbReference type="KEGG" id="ngk:NGK_0610"/>
<dbReference type="HOGENOM" id="CLU_053057_3_0_4"/>
<dbReference type="UniPathway" id="UPA00056">
    <property type="reaction ID" value="UER00094"/>
</dbReference>
<dbReference type="Proteomes" id="UP000002564">
    <property type="component" value="Chromosome"/>
</dbReference>
<dbReference type="GO" id="GO:0050515">
    <property type="term" value="F:4-(cytidine 5'-diphospho)-2-C-methyl-D-erythritol kinase activity"/>
    <property type="evidence" value="ECO:0007669"/>
    <property type="project" value="UniProtKB-UniRule"/>
</dbReference>
<dbReference type="GO" id="GO:0005524">
    <property type="term" value="F:ATP binding"/>
    <property type="evidence" value="ECO:0007669"/>
    <property type="project" value="UniProtKB-UniRule"/>
</dbReference>
<dbReference type="GO" id="GO:0019288">
    <property type="term" value="P:isopentenyl diphosphate biosynthetic process, methylerythritol 4-phosphate pathway"/>
    <property type="evidence" value="ECO:0007669"/>
    <property type="project" value="UniProtKB-UniRule"/>
</dbReference>
<dbReference type="GO" id="GO:0016114">
    <property type="term" value="P:terpenoid biosynthetic process"/>
    <property type="evidence" value="ECO:0007669"/>
    <property type="project" value="InterPro"/>
</dbReference>
<dbReference type="Gene3D" id="3.30.230.10">
    <property type="match status" value="1"/>
</dbReference>
<dbReference type="Gene3D" id="3.30.70.890">
    <property type="entry name" value="GHMP kinase, C-terminal domain"/>
    <property type="match status" value="1"/>
</dbReference>
<dbReference type="HAMAP" id="MF_00061">
    <property type="entry name" value="IspE"/>
    <property type="match status" value="1"/>
</dbReference>
<dbReference type="InterPro" id="IPR013750">
    <property type="entry name" value="GHMP_kinase_C_dom"/>
</dbReference>
<dbReference type="InterPro" id="IPR036554">
    <property type="entry name" value="GHMP_kinase_C_sf"/>
</dbReference>
<dbReference type="InterPro" id="IPR006204">
    <property type="entry name" value="GHMP_kinase_N_dom"/>
</dbReference>
<dbReference type="InterPro" id="IPR004424">
    <property type="entry name" value="IspE"/>
</dbReference>
<dbReference type="InterPro" id="IPR020568">
    <property type="entry name" value="Ribosomal_Su5_D2-typ_SF"/>
</dbReference>
<dbReference type="InterPro" id="IPR014721">
    <property type="entry name" value="Ribsml_uS5_D2-typ_fold_subgr"/>
</dbReference>
<dbReference type="NCBIfam" id="TIGR00154">
    <property type="entry name" value="ispE"/>
    <property type="match status" value="1"/>
</dbReference>
<dbReference type="PANTHER" id="PTHR43527">
    <property type="entry name" value="4-DIPHOSPHOCYTIDYL-2-C-METHYL-D-ERYTHRITOL KINASE, CHLOROPLASTIC"/>
    <property type="match status" value="1"/>
</dbReference>
<dbReference type="PANTHER" id="PTHR43527:SF2">
    <property type="entry name" value="4-DIPHOSPHOCYTIDYL-2-C-METHYL-D-ERYTHRITOL KINASE, CHLOROPLASTIC"/>
    <property type="match status" value="1"/>
</dbReference>
<dbReference type="Pfam" id="PF08544">
    <property type="entry name" value="GHMP_kinases_C"/>
    <property type="match status" value="1"/>
</dbReference>
<dbReference type="Pfam" id="PF00288">
    <property type="entry name" value="GHMP_kinases_N"/>
    <property type="match status" value="1"/>
</dbReference>
<dbReference type="PIRSF" id="PIRSF010376">
    <property type="entry name" value="IspE"/>
    <property type="match status" value="1"/>
</dbReference>
<dbReference type="SUPFAM" id="SSF55060">
    <property type="entry name" value="GHMP Kinase, C-terminal domain"/>
    <property type="match status" value="1"/>
</dbReference>
<dbReference type="SUPFAM" id="SSF54211">
    <property type="entry name" value="Ribosomal protein S5 domain 2-like"/>
    <property type="match status" value="1"/>
</dbReference>
<comment type="function">
    <text evidence="1">Catalyzes the phosphorylation of the position 2 hydroxy group of 4-diphosphocytidyl-2C-methyl-D-erythritol.</text>
</comment>
<comment type="catalytic activity">
    <reaction evidence="1">
        <text>4-CDP-2-C-methyl-D-erythritol + ATP = 4-CDP-2-C-methyl-D-erythritol 2-phosphate + ADP + H(+)</text>
        <dbReference type="Rhea" id="RHEA:18437"/>
        <dbReference type="ChEBI" id="CHEBI:15378"/>
        <dbReference type="ChEBI" id="CHEBI:30616"/>
        <dbReference type="ChEBI" id="CHEBI:57823"/>
        <dbReference type="ChEBI" id="CHEBI:57919"/>
        <dbReference type="ChEBI" id="CHEBI:456216"/>
        <dbReference type="EC" id="2.7.1.148"/>
    </reaction>
</comment>
<comment type="pathway">
    <text evidence="1">Isoprenoid biosynthesis; isopentenyl diphosphate biosynthesis via DXP pathway; isopentenyl diphosphate from 1-deoxy-D-xylulose 5-phosphate: step 3/6.</text>
</comment>
<comment type="similarity">
    <text evidence="1">Belongs to the GHMP kinase family. IspE subfamily.</text>
</comment>
<organism>
    <name type="scientific">Neisseria gonorrhoeae (strain NCCP11945)</name>
    <dbReference type="NCBI Taxonomy" id="521006"/>
    <lineage>
        <taxon>Bacteria</taxon>
        <taxon>Pseudomonadati</taxon>
        <taxon>Pseudomonadota</taxon>
        <taxon>Betaproteobacteria</taxon>
        <taxon>Neisseriales</taxon>
        <taxon>Neisseriaceae</taxon>
        <taxon>Neisseria</taxon>
    </lineage>
</organism>
<reference key="1">
    <citation type="journal article" date="2008" name="J. Bacteriol.">
        <title>Complete genome sequence of Neisseria gonorrhoeae NCCP11945.</title>
        <authorList>
            <person name="Chung G.T."/>
            <person name="Yoo J.S."/>
            <person name="Oh H.B."/>
            <person name="Lee Y.S."/>
            <person name="Cha S.H."/>
            <person name="Kim S.J."/>
            <person name="Yoo C.K."/>
        </authorList>
    </citation>
    <scope>NUCLEOTIDE SEQUENCE [LARGE SCALE GENOMIC DNA]</scope>
    <source>
        <strain>NCCP11945</strain>
    </source>
</reference>
<sequence>MNIADGRQAFPAPAKLNLDLRITGRREDGYHNIESIFCLIDLQDTVYLKPRDDGKIILHNPVGGIPQEADLSYRAASLLQKYARNLAGVEIWLDKKIPTGAGLGGGSSDAATVLLVLNRWWQCGLTQWQLIDLGAALGADVPFFIFGKNAFASGIGEKLIGMDIPKQWYVIVKPPVHVSTAKIFTYEGLTRDSASSIMPTFQNLQPFRNDMQAVVFKEYPEVWKAYSELSKYGSAMMTGSGACIFAAFQARNSAYNIYRQVSGLYEAYLAEGLSKHPLLSV</sequence>